<gene>
    <name evidence="1" type="primary">ilvD</name>
    <name type="ordered locus">P9301_08341</name>
</gene>
<reference key="1">
    <citation type="journal article" date="2007" name="PLoS Genet.">
        <title>Patterns and implications of gene gain and loss in the evolution of Prochlorococcus.</title>
        <authorList>
            <person name="Kettler G.C."/>
            <person name="Martiny A.C."/>
            <person name="Huang K."/>
            <person name="Zucker J."/>
            <person name="Coleman M.L."/>
            <person name="Rodrigue S."/>
            <person name="Chen F."/>
            <person name="Lapidus A."/>
            <person name="Ferriera S."/>
            <person name="Johnson J."/>
            <person name="Steglich C."/>
            <person name="Church G.M."/>
            <person name="Richardson P."/>
            <person name="Chisholm S.W."/>
        </authorList>
    </citation>
    <scope>NUCLEOTIDE SEQUENCE [LARGE SCALE GENOMIC DNA]</scope>
    <source>
        <strain>MIT 9301</strain>
    </source>
</reference>
<comment type="function">
    <text evidence="1">Functions in the biosynthesis of branched-chain amino acids. Catalyzes the dehydration of (2R,3R)-2,3-dihydroxy-3-methylpentanoate (2,3-dihydroxy-3-methylvalerate) into 2-oxo-3-methylpentanoate (2-oxo-3-methylvalerate) and of (2R)-2,3-dihydroxy-3-methylbutanoate (2,3-dihydroxyisovalerate) into 2-oxo-3-methylbutanoate (2-oxoisovalerate), the penultimate precursor to L-isoleucine and L-valine, respectively.</text>
</comment>
<comment type="catalytic activity">
    <reaction evidence="1">
        <text>(2R)-2,3-dihydroxy-3-methylbutanoate = 3-methyl-2-oxobutanoate + H2O</text>
        <dbReference type="Rhea" id="RHEA:24809"/>
        <dbReference type="ChEBI" id="CHEBI:11851"/>
        <dbReference type="ChEBI" id="CHEBI:15377"/>
        <dbReference type="ChEBI" id="CHEBI:49072"/>
        <dbReference type="EC" id="4.2.1.9"/>
    </reaction>
    <physiologicalReaction direction="left-to-right" evidence="1">
        <dbReference type="Rhea" id="RHEA:24810"/>
    </physiologicalReaction>
</comment>
<comment type="catalytic activity">
    <reaction evidence="1">
        <text>(2R,3R)-2,3-dihydroxy-3-methylpentanoate = (S)-3-methyl-2-oxopentanoate + H2O</text>
        <dbReference type="Rhea" id="RHEA:27694"/>
        <dbReference type="ChEBI" id="CHEBI:15377"/>
        <dbReference type="ChEBI" id="CHEBI:35146"/>
        <dbReference type="ChEBI" id="CHEBI:49258"/>
        <dbReference type="EC" id="4.2.1.9"/>
    </reaction>
    <physiologicalReaction direction="left-to-right" evidence="1">
        <dbReference type="Rhea" id="RHEA:27695"/>
    </physiologicalReaction>
</comment>
<comment type="cofactor">
    <cofactor evidence="1">
        <name>[2Fe-2S] cluster</name>
        <dbReference type="ChEBI" id="CHEBI:190135"/>
    </cofactor>
    <text evidence="1">Binds 1 [2Fe-2S] cluster per subunit. This cluster acts as a Lewis acid cofactor.</text>
</comment>
<comment type="cofactor">
    <cofactor evidence="1">
        <name>Mg(2+)</name>
        <dbReference type="ChEBI" id="CHEBI:18420"/>
    </cofactor>
</comment>
<comment type="pathway">
    <text evidence="1">Amino-acid biosynthesis; L-isoleucine biosynthesis; L-isoleucine from 2-oxobutanoate: step 3/4.</text>
</comment>
<comment type="pathway">
    <text evidence="1">Amino-acid biosynthesis; L-valine biosynthesis; L-valine from pyruvate: step 3/4.</text>
</comment>
<comment type="subunit">
    <text evidence="1">Homodimer.</text>
</comment>
<comment type="similarity">
    <text evidence="1">Belongs to the IlvD/Edd family.</text>
</comment>
<protein>
    <recommendedName>
        <fullName evidence="1">Dihydroxy-acid dehydratase</fullName>
        <shortName evidence="1">DAD</shortName>
        <ecNumber evidence="1">4.2.1.9</ecNumber>
    </recommendedName>
</protein>
<dbReference type="EC" id="4.2.1.9" evidence="1"/>
<dbReference type="EMBL" id="CP000576">
    <property type="protein sequence ID" value="ABO17457.1"/>
    <property type="molecule type" value="Genomic_DNA"/>
</dbReference>
<dbReference type="RefSeq" id="WP_011862811.1">
    <property type="nucleotide sequence ID" value="NC_009091.1"/>
</dbReference>
<dbReference type="SMR" id="A3PCI2"/>
<dbReference type="STRING" id="167546.P9301_08341"/>
<dbReference type="KEGG" id="pmg:P9301_08341"/>
<dbReference type="eggNOG" id="COG0129">
    <property type="taxonomic scope" value="Bacteria"/>
</dbReference>
<dbReference type="HOGENOM" id="CLU_014271_4_2_3"/>
<dbReference type="OrthoDB" id="9807077at2"/>
<dbReference type="UniPathway" id="UPA00047">
    <property type="reaction ID" value="UER00057"/>
</dbReference>
<dbReference type="UniPathway" id="UPA00049">
    <property type="reaction ID" value="UER00061"/>
</dbReference>
<dbReference type="Proteomes" id="UP000001430">
    <property type="component" value="Chromosome"/>
</dbReference>
<dbReference type="GO" id="GO:0051537">
    <property type="term" value="F:2 iron, 2 sulfur cluster binding"/>
    <property type="evidence" value="ECO:0007669"/>
    <property type="project" value="UniProtKB-UniRule"/>
</dbReference>
<dbReference type="GO" id="GO:0004160">
    <property type="term" value="F:dihydroxy-acid dehydratase activity"/>
    <property type="evidence" value="ECO:0007669"/>
    <property type="project" value="UniProtKB-UniRule"/>
</dbReference>
<dbReference type="GO" id="GO:0000287">
    <property type="term" value="F:magnesium ion binding"/>
    <property type="evidence" value="ECO:0007669"/>
    <property type="project" value="UniProtKB-UniRule"/>
</dbReference>
<dbReference type="GO" id="GO:0009097">
    <property type="term" value="P:isoleucine biosynthetic process"/>
    <property type="evidence" value="ECO:0007669"/>
    <property type="project" value="UniProtKB-UniRule"/>
</dbReference>
<dbReference type="GO" id="GO:0009099">
    <property type="term" value="P:L-valine biosynthetic process"/>
    <property type="evidence" value="ECO:0007669"/>
    <property type="project" value="UniProtKB-UniRule"/>
</dbReference>
<dbReference type="FunFam" id="3.50.30.80:FF:000001">
    <property type="entry name" value="Dihydroxy-acid dehydratase"/>
    <property type="match status" value="1"/>
</dbReference>
<dbReference type="Gene3D" id="3.50.30.80">
    <property type="entry name" value="IlvD/EDD C-terminal domain-like"/>
    <property type="match status" value="1"/>
</dbReference>
<dbReference type="HAMAP" id="MF_00012">
    <property type="entry name" value="IlvD"/>
    <property type="match status" value="1"/>
</dbReference>
<dbReference type="InterPro" id="IPR050165">
    <property type="entry name" value="DHAD_IlvD/Edd"/>
</dbReference>
<dbReference type="InterPro" id="IPR042096">
    <property type="entry name" value="Dihydro-acid_dehy_C"/>
</dbReference>
<dbReference type="InterPro" id="IPR004404">
    <property type="entry name" value="DihydroxyA_deHydtase"/>
</dbReference>
<dbReference type="InterPro" id="IPR020558">
    <property type="entry name" value="DiOHA_6PGluconate_deHydtase_CS"/>
</dbReference>
<dbReference type="InterPro" id="IPR056740">
    <property type="entry name" value="ILV_EDD_C"/>
</dbReference>
<dbReference type="InterPro" id="IPR000581">
    <property type="entry name" value="ILV_EDD_N"/>
</dbReference>
<dbReference type="InterPro" id="IPR037237">
    <property type="entry name" value="IlvD/EDD_N"/>
</dbReference>
<dbReference type="NCBIfam" id="TIGR00110">
    <property type="entry name" value="ilvD"/>
    <property type="match status" value="1"/>
</dbReference>
<dbReference type="NCBIfam" id="NF002068">
    <property type="entry name" value="PRK00911.1"/>
    <property type="match status" value="1"/>
</dbReference>
<dbReference type="PANTHER" id="PTHR21000">
    <property type="entry name" value="DIHYDROXY-ACID DEHYDRATASE DAD"/>
    <property type="match status" value="1"/>
</dbReference>
<dbReference type="PANTHER" id="PTHR21000:SF5">
    <property type="entry name" value="DIHYDROXY-ACID DEHYDRATASE, MITOCHONDRIAL"/>
    <property type="match status" value="1"/>
</dbReference>
<dbReference type="Pfam" id="PF24877">
    <property type="entry name" value="ILV_EDD_C"/>
    <property type="match status" value="1"/>
</dbReference>
<dbReference type="Pfam" id="PF00920">
    <property type="entry name" value="ILVD_EDD_N"/>
    <property type="match status" value="1"/>
</dbReference>
<dbReference type="SUPFAM" id="SSF143975">
    <property type="entry name" value="IlvD/EDD N-terminal domain-like"/>
    <property type="match status" value="1"/>
</dbReference>
<dbReference type="SUPFAM" id="SSF52016">
    <property type="entry name" value="LeuD/IlvD-like"/>
    <property type="match status" value="1"/>
</dbReference>
<dbReference type="PROSITE" id="PS00886">
    <property type="entry name" value="ILVD_EDD_1"/>
    <property type="match status" value="1"/>
</dbReference>
<dbReference type="PROSITE" id="PS00887">
    <property type="entry name" value="ILVD_EDD_2"/>
    <property type="match status" value="1"/>
</dbReference>
<keyword id="KW-0001">2Fe-2S</keyword>
<keyword id="KW-0028">Amino-acid biosynthesis</keyword>
<keyword id="KW-0100">Branched-chain amino acid biosynthesis</keyword>
<keyword id="KW-0408">Iron</keyword>
<keyword id="KW-0411">Iron-sulfur</keyword>
<keyword id="KW-0456">Lyase</keyword>
<keyword id="KW-0460">Magnesium</keyword>
<keyword id="KW-0479">Metal-binding</keyword>
<keyword id="KW-1185">Reference proteome</keyword>
<sequence length="557" mass="59125">MNKLRSSAITQGVQRSPNRSMLRAVGFNDEDFNKPIIGVANGYSTITPCNMGLNKLALKAEESIKRSGGMPQMFGTITVSDGISMGTEGMKYSLVSREVIADSIETACNAQSMDGVLAIGGCDKNMPGAMIAIARMNIPSIFIYGGTIKPGKLYGEDLTVVSAFEAVGQLTSGKITEERLIQVEKNCIPGAGSCGGMFTANTMSAVIEVLGLSLPHSSTMAAEDLEKELSADKSAEILVSAIKKDIRPLDLMTKKAFENAISVIMAIGGSTNAVLHILAIANTAGIDININDFERIRQKVPVICDLKPSGKYVTVDLHKAGGIPQVMKILLNAGLIHGDCKNIEGKTISEYLQNIPDKPPTNQNVIRDIHDPLYKKGHLAILKGNLASEGSVAKISGVKNPVLTGPAKIFESEEDCLKSILNNDIKAGDVVVIRNEGPVGGPGMREMLAPTSAIVGQGLGEKVALITDGRFSGGTYGLVVGHIAPEAAVGGNIALIKEGDLITVDAVKQLIEVNLSDEELKKRKKDWVKPIQKYKRGILSKYSRIVSTSSLGAVTDL</sequence>
<evidence type="ECO:0000255" key="1">
    <source>
        <dbReference type="HAMAP-Rule" id="MF_00012"/>
    </source>
</evidence>
<feature type="chain" id="PRO_1000001027" description="Dihydroxy-acid dehydratase">
    <location>
        <begin position="1"/>
        <end position="557"/>
    </location>
</feature>
<feature type="active site" description="Proton acceptor" evidence="1">
    <location>
        <position position="472"/>
    </location>
</feature>
<feature type="binding site" evidence="1">
    <location>
        <position position="49"/>
    </location>
    <ligand>
        <name>[2Fe-2S] cluster</name>
        <dbReference type="ChEBI" id="CHEBI:190135"/>
    </ligand>
</feature>
<feature type="binding site" evidence="1">
    <location>
        <position position="81"/>
    </location>
    <ligand>
        <name>Mg(2+)</name>
        <dbReference type="ChEBI" id="CHEBI:18420"/>
    </ligand>
</feature>
<feature type="binding site" evidence="1">
    <location>
        <position position="122"/>
    </location>
    <ligand>
        <name>[2Fe-2S] cluster</name>
        <dbReference type="ChEBI" id="CHEBI:190135"/>
    </ligand>
</feature>
<feature type="binding site" evidence="1">
    <location>
        <position position="123"/>
    </location>
    <ligand>
        <name>Mg(2+)</name>
        <dbReference type="ChEBI" id="CHEBI:18420"/>
    </ligand>
</feature>
<feature type="binding site" description="via carbamate group" evidence="1">
    <location>
        <position position="124"/>
    </location>
    <ligand>
        <name>Mg(2+)</name>
        <dbReference type="ChEBI" id="CHEBI:18420"/>
    </ligand>
</feature>
<feature type="binding site" evidence="1">
    <location>
        <position position="194"/>
    </location>
    <ligand>
        <name>[2Fe-2S] cluster</name>
        <dbReference type="ChEBI" id="CHEBI:190135"/>
    </ligand>
</feature>
<feature type="binding site" evidence="1">
    <location>
        <position position="446"/>
    </location>
    <ligand>
        <name>Mg(2+)</name>
        <dbReference type="ChEBI" id="CHEBI:18420"/>
    </ligand>
</feature>
<feature type="modified residue" description="N6-carboxylysine" evidence="1">
    <location>
        <position position="124"/>
    </location>
</feature>
<proteinExistence type="inferred from homology"/>
<organism>
    <name type="scientific">Prochlorococcus marinus (strain MIT 9301)</name>
    <dbReference type="NCBI Taxonomy" id="167546"/>
    <lineage>
        <taxon>Bacteria</taxon>
        <taxon>Bacillati</taxon>
        <taxon>Cyanobacteriota</taxon>
        <taxon>Cyanophyceae</taxon>
        <taxon>Synechococcales</taxon>
        <taxon>Prochlorococcaceae</taxon>
        <taxon>Prochlorococcus</taxon>
    </lineage>
</organism>
<accession>A3PCI2</accession>
<name>ILVD_PROM0</name>